<comment type="function">
    <text evidence="1">Catalyzes the thiamine diphosphate-dependent decarboxylation of 2-oxoglutarate and the subsequent addition of the resulting succinic semialdehyde-thiamine pyrophosphate anion to isochorismate to yield 2-succinyl-5-enolpyruvyl-6-hydroxy-3-cyclohexene-1-carboxylate (SEPHCHC).</text>
</comment>
<comment type="catalytic activity">
    <reaction evidence="1">
        <text>isochorismate + 2-oxoglutarate + H(+) = 5-enolpyruvoyl-6-hydroxy-2-succinyl-cyclohex-3-ene-1-carboxylate + CO2</text>
        <dbReference type="Rhea" id="RHEA:25593"/>
        <dbReference type="ChEBI" id="CHEBI:15378"/>
        <dbReference type="ChEBI" id="CHEBI:16526"/>
        <dbReference type="ChEBI" id="CHEBI:16810"/>
        <dbReference type="ChEBI" id="CHEBI:29780"/>
        <dbReference type="ChEBI" id="CHEBI:58818"/>
        <dbReference type="EC" id="2.2.1.9"/>
    </reaction>
</comment>
<comment type="cofactor">
    <cofactor evidence="1">
        <name>Mg(2+)</name>
        <dbReference type="ChEBI" id="CHEBI:18420"/>
    </cofactor>
    <cofactor evidence="1">
        <name>Mn(2+)</name>
        <dbReference type="ChEBI" id="CHEBI:29035"/>
    </cofactor>
</comment>
<comment type="cofactor">
    <cofactor evidence="1">
        <name>thiamine diphosphate</name>
        <dbReference type="ChEBI" id="CHEBI:58937"/>
    </cofactor>
    <text evidence="1">Binds 1 thiamine pyrophosphate per subunit.</text>
</comment>
<comment type="pathway">
    <text evidence="1">Quinol/quinone metabolism; 1,4-dihydroxy-2-naphthoate biosynthesis; 1,4-dihydroxy-2-naphthoate from chorismate: step 2/7.</text>
</comment>
<comment type="pathway">
    <text evidence="1">Quinol/quinone metabolism; menaquinone biosynthesis.</text>
</comment>
<comment type="subunit">
    <text evidence="1">Homodimer.</text>
</comment>
<comment type="similarity">
    <text evidence="1">Belongs to the TPP enzyme family. MenD subfamily.</text>
</comment>
<reference key="1">
    <citation type="submission" date="2006-08" db="EMBL/GenBank/DDBJ databases">
        <title>Complete sequence of Shewanella sp. MR-4.</title>
        <authorList>
            <consortium name="US DOE Joint Genome Institute"/>
            <person name="Copeland A."/>
            <person name="Lucas S."/>
            <person name="Lapidus A."/>
            <person name="Barry K."/>
            <person name="Detter J.C."/>
            <person name="Glavina del Rio T."/>
            <person name="Hammon N."/>
            <person name="Israni S."/>
            <person name="Dalin E."/>
            <person name="Tice H."/>
            <person name="Pitluck S."/>
            <person name="Kiss H."/>
            <person name="Brettin T."/>
            <person name="Bruce D."/>
            <person name="Han C."/>
            <person name="Tapia R."/>
            <person name="Gilna P."/>
            <person name="Schmutz J."/>
            <person name="Larimer F."/>
            <person name="Land M."/>
            <person name="Hauser L."/>
            <person name="Kyrpides N."/>
            <person name="Mikhailova N."/>
            <person name="Nealson K."/>
            <person name="Konstantinidis K."/>
            <person name="Klappenbach J."/>
            <person name="Tiedje J."/>
            <person name="Richardson P."/>
        </authorList>
    </citation>
    <scope>NUCLEOTIDE SEQUENCE [LARGE SCALE GENOMIC DNA]</scope>
    <source>
        <strain>MR-4</strain>
    </source>
</reference>
<accession>Q0HDN7</accession>
<dbReference type="EC" id="2.2.1.9" evidence="1"/>
<dbReference type="EMBL" id="CP000446">
    <property type="protein sequence ID" value="ABI40830.1"/>
    <property type="molecule type" value="Genomic_DNA"/>
</dbReference>
<dbReference type="RefSeq" id="WP_011624488.1">
    <property type="nucleotide sequence ID" value="NC_008321.1"/>
</dbReference>
<dbReference type="SMR" id="Q0HDN7"/>
<dbReference type="KEGG" id="she:Shewmr4_3767"/>
<dbReference type="HOGENOM" id="CLU_006051_3_0_6"/>
<dbReference type="UniPathway" id="UPA00079"/>
<dbReference type="UniPathway" id="UPA01057">
    <property type="reaction ID" value="UER00164"/>
</dbReference>
<dbReference type="GO" id="GO:0070204">
    <property type="term" value="F:2-succinyl-5-enolpyruvyl-6-hydroxy-3-cyclohexene-1-carboxylic-acid synthase activity"/>
    <property type="evidence" value="ECO:0007669"/>
    <property type="project" value="UniProtKB-UniRule"/>
</dbReference>
<dbReference type="GO" id="GO:0000287">
    <property type="term" value="F:magnesium ion binding"/>
    <property type="evidence" value="ECO:0007669"/>
    <property type="project" value="UniProtKB-UniRule"/>
</dbReference>
<dbReference type="GO" id="GO:0030145">
    <property type="term" value="F:manganese ion binding"/>
    <property type="evidence" value="ECO:0007669"/>
    <property type="project" value="UniProtKB-UniRule"/>
</dbReference>
<dbReference type="GO" id="GO:0030976">
    <property type="term" value="F:thiamine pyrophosphate binding"/>
    <property type="evidence" value="ECO:0007669"/>
    <property type="project" value="UniProtKB-UniRule"/>
</dbReference>
<dbReference type="GO" id="GO:0009234">
    <property type="term" value="P:menaquinone biosynthetic process"/>
    <property type="evidence" value="ECO:0007669"/>
    <property type="project" value="UniProtKB-UniRule"/>
</dbReference>
<dbReference type="CDD" id="cd07037">
    <property type="entry name" value="TPP_PYR_MenD"/>
    <property type="match status" value="1"/>
</dbReference>
<dbReference type="CDD" id="cd02009">
    <property type="entry name" value="TPP_SHCHC_synthase"/>
    <property type="match status" value="1"/>
</dbReference>
<dbReference type="Gene3D" id="3.40.50.970">
    <property type="match status" value="2"/>
</dbReference>
<dbReference type="Gene3D" id="3.40.50.1220">
    <property type="entry name" value="TPP-binding domain"/>
    <property type="match status" value="1"/>
</dbReference>
<dbReference type="HAMAP" id="MF_01659">
    <property type="entry name" value="MenD"/>
    <property type="match status" value="1"/>
</dbReference>
<dbReference type="InterPro" id="IPR029035">
    <property type="entry name" value="DHS-like_NAD/FAD-binding_dom"/>
</dbReference>
<dbReference type="InterPro" id="IPR004433">
    <property type="entry name" value="MenaQ_synth_MenD"/>
</dbReference>
<dbReference type="InterPro" id="IPR032264">
    <property type="entry name" value="MenD_middle"/>
</dbReference>
<dbReference type="InterPro" id="IPR029061">
    <property type="entry name" value="THDP-binding"/>
</dbReference>
<dbReference type="InterPro" id="IPR012001">
    <property type="entry name" value="Thiamin_PyroP_enz_TPP-bd_dom"/>
</dbReference>
<dbReference type="InterPro" id="IPR011766">
    <property type="entry name" value="TPP_enzyme_TPP-bd"/>
</dbReference>
<dbReference type="NCBIfam" id="TIGR00173">
    <property type="entry name" value="menD"/>
    <property type="match status" value="1"/>
</dbReference>
<dbReference type="PANTHER" id="PTHR42916">
    <property type="entry name" value="2-SUCCINYL-5-ENOLPYRUVYL-6-HYDROXY-3-CYCLOHEXENE-1-CARBOXYLATE SYNTHASE"/>
    <property type="match status" value="1"/>
</dbReference>
<dbReference type="PANTHER" id="PTHR42916:SF1">
    <property type="entry name" value="PROTEIN PHYLLO, CHLOROPLASTIC"/>
    <property type="match status" value="1"/>
</dbReference>
<dbReference type="Pfam" id="PF02775">
    <property type="entry name" value="TPP_enzyme_C"/>
    <property type="match status" value="1"/>
</dbReference>
<dbReference type="Pfam" id="PF16582">
    <property type="entry name" value="TPP_enzyme_M_2"/>
    <property type="match status" value="1"/>
</dbReference>
<dbReference type="Pfam" id="PF02776">
    <property type="entry name" value="TPP_enzyme_N"/>
    <property type="match status" value="1"/>
</dbReference>
<dbReference type="PIRSF" id="PIRSF004983">
    <property type="entry name" value="MenD"/>
    <property type="match status" value="1"/>
</dbReference>
<dbReference type="SUPFAM" id="SSF52467">
    <property type="entry name" value="DHS-like NAD/FAD-binding domain"/>
    <property type="match status" value="1"/>
</dbReference>
<dbReference type="SUPFAM" id="SSF52518">
    <property type="entry name" value="Thiamin diphosphate-binding fold (THDP-binding)"/>
    <property type="match status" value="2"/>
</dbReference>
<protein>
    <recommendedName>
        <fullName evidence="1">2-succinyl-5-enolpyruvyl-6-hydroxy-3-cyclohexene-1-carboxylate synthase</fullName>
        <shortName evidence="1">SEPHCHC synthase</shortName>
        <ecNumber evidence="1">2.2.1.9</ecNumber>
    </recommendedName>
    <alternativeName>
        <fullName evidence="1">Menaquinone biosynthesis protein MenD</fullName>
    </alternativeName>
</protein>
<proteinExistence type="inferred from homology"/>
<organism>
    <name type="scientific">Shewanella sp. (strain MR-4)</name>
    <dbReference type="NCBI Taxonomy" id="60480"/>
    <lineage>
        <taxon>Bacteria</taxon>
        <taxon>Pseudomonadati</taxon>
        <taxon>Pseudomonadota</taxon>
        <taxon>Gammaproteobacteria</taxon>
        <taxon>Alteromonadales</taxon>
        <taxon>Shewanellaceae</taxon>
        <taxon>Shewanella</taxon>
    </lineage>
</organism>
<feature type="chain" id="PRO_0000341839" description="2-succinyl-5-enolpyruvyl-6-hydroxy-3-cyclohexene-1-carboxylate synthase">
    <location>
        <begin position="1"/>
        <end position="573"/>
    </location>
</feature>
<evidence type="ECO:0000255" key="1">
    <source>
        <dbReference type="HAMAP-Rule" id="MF_01659"/>
    </source>
</evidence>
<name>MEND_SHESM</name>
<sequence length="573" mass="63197">MRTENTATLNLMWGALILEELARLGVQHVCMAPGSRSTPLTLAAAQQTKLKRHLHFDERGLGFMALGLAKASCAPVAIITTSGTAVANLYPAIVEAWLTHVPLIVLSGDRPPELLGCGANQAIVQPAIFANYAQQVNLPTPDAHIAPQMLLTTLDEAVANQTRPVHINCMYREPLYPSEMSGTILDSESPYLRPLQTWLQHARPYTQYGKSEQLSSPSDDAIMRFVHGKGVIIAGTLTPEQDPQQLIALSQKIGWPLLTDAQSQLRQHPAAIGNIDQLLQHPKARNLLQEADRVLVFGGRLLSKRLIAYLAEQNWHSYWQVLPQQDRLDPSHNAKHIWHANAAQFAQLNWYRSSSANWANTLVTYNDELHSLFVRNIDQGEFGEAQVIRAIANTRPLEQQLFIGNSLPVRLYDMYAPVSCCTATTYTNRGASGIDGLLATACGIAAHQGKPTSLIIGDLSQLHDLNSFAIARSLTSPLVIIILNNDGGNIFNLLPVPNEELRSDYYRLSHGLEFGYAAAMFNLPYNQVDNLADFQSCYHEALDYQGASVIEVSVSQHQASEQIAALNLWVKQS</sequence>
<keyword id="KW-0460">Magnesium</keyword>
<keyword id="KW-0464">Manganese</keyword>
<keyword id="KW-0474">Menaquinone biosynthesis</keyword>
<keyword id="KW-0479">Metal-binding</keyword>
<keyword id="KW-0786">Thiamine pyrophosphate</keyword>
<keyword id="KW-0808">Transferase</keyword>
<gene>
    <name evidence="1" type="primary">menD</name>
    <name type="ordered locus">Shewmr4_3767</name>
</gene>